<sequence>MAFVLSLLMALVLVSYGPGGSLGCYLSQRLMLDARENLKLLDRMNRLSPHSCLQDRKDFGLPQEMVEGDQLQKDQAFPVLYEMLQQSFNLFYTEHSSAAWDTTLLEQLCTGLQQQLDHLDTCRGQVMGEEDSELGNMDPIVTVKKYFQGIYDYLQEKGYSDCAWEIVRVEMMRALTVSTTLQKRLTKMGGDLNSP</sequence>
<proteinExistence type="evidence at protein level"/>
<comment type="function">
    <text evidence="7">Paracrine hormone primarily responsible for maternal recognition of pregnancy. Interacts with endometrial receptors, probably type I interferon receptors, and blocks estrogen receptor expression, preventing the estrogen-induced increase in oxytocin receptor expression in the endometrium. This results in the suppression of the pulsatile endometrial release of the luteolytic hormone prostaglandin F2-alpha, hindering the regression of the corpus luteum (luteolysis) and therefore a return to ovarian cyclicity. This, and a possible direct effect of IFN-tau on prostaglandin synthesis, leads in turn to continued ovarian progesterone secretion, which stimulates the secretion by the endometrium of the nutrients required for the growth of the conceptus. In summary, displays particularly high antiviral and antiproliferative potency concurrently with particular weak cytotoxicity, high antiluteolytic activity and immunomodulatory properties. In contrast with other IFNs, IFN-tau is not virally inducible.</text>
</comment>
<comment type="subcellular location">
    <subcellularLocation>
        <location>Secreted</location>
    </subcellularLocation>
    <text>Secreted into the uterine lumen.</text>
</comment>
<comment type="tissue specificity">
    <text>Constitutively and exclusively expressed in the mononuclear cells of the extraembryonic trophectoderm.</text>
</comment>
<comment type="developmental stage">
    <text>Major secretory product synthesized by the sheep conceptus between days 13 and 21 of pregnancy.</text>
</comment>
<comment type="polymorphism">
    <text evidence="2 3 4 5 8">There seems to be three variants of IFN-tau 2: A/P8V2/P7 (shown here), B/P8V4 and C/P8.</text>
</comment>
<comment type="miscellaneous">
    <text>IFN-tau genes are intronless. They evolved from IFN-omega genes in the ruminantia suborder and have continued to duplicate independently in different lineages of the ruminantia. They code for proteins very similar in sequence but with different biological potency and pattern of expression.</text>
</comment>
<comment type="similarity">
    <text evidence="9">Belongs to the alpha/beta interferon family. IFN-alphaII subfamily.</text>
</comment>
<feature type="signal peptide" evidence="6">
    <location>
        <begin position="1"/>
        <end position="23"/>
    </location>
</feature>
<feature type="chain" id="PRO_0000016414" description="Interferon tau-2">
    <location>
        <begin position="24"/>
        <end position="195"/>
    </location>
</feature>
<feature type="disulfide bond" evidence="1">
    <location>
        <begin position="24"/>
        <end position="122"/>
    </location>
</feature>
<feature type="disulfide bond" evidence="1">
    <location>
        <begin position="52"/>
        <end position="162"/>
    </location>
</feature>
<feature type="sequence variant" description="In IFN-tau2C." evidence="2 3 4 5">
    <original>E</original>
    <variation>D</variation>
    <location>
        <position position="106"/>
    </location>
</feature>
<feature type="sequence variant" description="In IFN-tau2B." evidence="8">
    <original>E</original>
    <variation>K</variation>
    <location>
        <position position="130"/>
    </location>
</feature>
<name>IFNT2_SHEEP</name>
<accession>P56829</accession>
<accession>P08316</accession>
<evidence type="ECO:0000250" key="1"/>
<evidence type="ECO:0000269" key="2">
    <source>
    </source>
</evidence>
<evidence type="ECO:0000269" key="3">
    <source>
    </source>
</evidence>
<evidence type="ECO:0000269" key="4">
    <source>
    </source>
</evidence>
<evidence type="ECO:0000269" key="5">
    <source>
    </source>
</evidence>
<evidence type="ECO:0000269" key="6">
    <source>
    </source>
</evidence>
<evidence type="ECO:0000269" key="7">
    <source>
    </source>
</evidence>
<evidence type="ECO:0000269" key="8">
    <source ref="5"/>
</evidence>
<evidence type="ECO:0000305" key="9"/>
<gene>
    <name type="primary">IFNT2</name>
</gene>
<protein>
    <recommendedName>
        <fullName>Interferon tau-2</fullName>
        <shortName>IFN-tau-2</shortName>
    </recommendedName>
    <alternativeName>
        <fullName>Antiluteolysin</fullName>
    </alternativeName>
    <alternativeName>
        <fullName>Trophoblast antiluteolytic protein</fullName>
    </alternativeName>
    <alternativeName>
        <fullName>Trophoblast protein 1</fullName>
        <shortName>TP-1</shortName>
    </alternativeName>
    <alternativeName>
        <fullName>Trophoblastin</fullName>
    </alternativeName>
</protein>
<dbReference type="EMBL" id="X07920">
    <property type="protein sequence ID" value="CAA30753.1"/>
    <property type="molecule type" value="mRNA"/>
</dbReference>
<dbReference type="EMBL" id="M26386">
    <property type="protein sequence ID" value="AAA31584.1"/>
    <property type="molecule type" value="mRNA"/>
</dbReference>
<dbReference type="EMBL" id="X56344">
    <property type="protein sequence ID" value="CAA39784.1"/>
    <property type="molecule type" value="mRNA"/>
</dbReference>
<dbReference type="EMBL" id="X56345">
    <property type="protein sequence ID" value="CAA39785.1"/>
    <property type="molecule type" value="mRNA"/>
</dbReference>
<dbReference type="EMBL" id="AF158818">
    <property type="protein sequence ID" value="AAD44970.1"/>
    <property type="molecule type" value="mRNA"/>
</dbReference>
<dbReference type="EMBL" id="AF158820">
    <property type="protein sequence ID" value="AAD44972.1"/>
    <property type="molecule type" value="mRNA"/>
</dbReference>
<dbReference type="PIR" id="S03799">
    <property type="entry name" value="JS0204"/>
</dbReference>
<dbReference type="RefSeq" id="NP_001116871.1">
    <property type="nucleotide sequence ID" value="NM_001123399.1"/>
</dbReference>
<dbReference type="RefSeq" id="NP_001116872.1">
    <property type="nucleotide sequence ID" value="NM_001123400.1"/>
</dbReference>
<dbReference type="RefSeq" id="NP_001116873.1">
    <property type="nucleotide sequence ID" value="NM_001123401.1"/>
</dbReference>
<dbReference type="SMR" id="P56829"/>
<dbReference type="STRING" id="9940.ENSOARP00000022793"/>
<dbReference type="PaxDb" id="9940-ENSOARP00000022793"/>
<dbReference type="Ensembl" id="ENSOART00225060946">
    <property type="protein sequence ID" value="ENSOARP00225030648"/>
    <property type="gene ID" value="ENSOARG00225036822"/>
</dbReference>
<dbReference type="GeneID" id="100144751"/>
<dbReference type="KEGG" id="oas:100144750"/>
<dbReference type="KEGG" id="oas:100144752"/>
<dbReference type="CTD" id="100144751"/>
<dbReference type="eggNOG" id="ENOG502T289">
    <property type="taxonomic scope" value="Eukaryota"/>
</dbReference>
<dbReference type="Proteomes" id="UP000002356">
    <property type="component" value="Unplaced"/>
</dbReference>
<dbReference type="GO" id="GO:0005615">
    <property type="term" value="C:extracellular space"/>
    <property type="evidence" value="ECO:0007669"/>
    <property type="project" value="UniProtKB-KW"/>
</dbReference>
<dbReference type="GO" id="GO:0005125">
    <property type="term" value="F:cytokine activity"/>
    <property type="evidence" value="ECO:0007669"/>
    <property type="project" value="UniProtKB-KW"/>
</dbReference>
<dbReference type="GO" id="GO:0005126">
    <property type="term" value="F:cytokine receptor binding"/>
    <property type="evidence" value="ECO:0007669"/>
    <property type="project" value="InterPro"/>
</dbReference>
<dbReference type="GO" id="GO:0005179">
    <property type="term" value="F:hormone activity"/>
    <property type="evidence" value="ECO:0007669"/>
    <property type="project" value="UniProtKB-KW"/>
</dbReference>
<dbReference type="GO" id="GO:0051607">
    <property type="term" value="P:defense response to virus"/>
    <property type="evidence" value="ECO:0007669"/>
    <property type="project" value="UniProtKB-KW"/>
</dbReference>
<dbReference type="GO" id="GO:0007565">
    <property type="term" value="P:female pregnancy"/>
    <property type="evidence" value="ECO:0007669"/>
    <property type="project" value="UniProtKB-KW"/>
</dbReference>
<dbReference type="CDD" id="cd00095">
    <property type="entry name" value="IFab"/>
    <property type="match status" value="1"/>
</dbReference>
<dbReference type="FunFam" id="1.20.1250.10:FF:000001">
    <property type="entry name" value="Interferon alpha"/>
    <property type="match status" value="1"/>
</dbReference>
<dbReference type="Gene3D" id="1.20.1250.10">
    <property type="match status" value="1"/>
</dbReference>
<dbReference type="InterPro" id="IPR009079">
    <property type="entry name" value="4_helix_cytokine-like_core"/>
</dbReference>
<dbReference type="InterPro" id="IPR000471">
    <property type="entry name" value="Interferon_alpha/beta/delta"/>
</dbReference>
<dbReference type="PANTHER" id="PTHR11691:SF37">
    <property type="entry name" value="INTERFERON OMEGA-1"/>
    <property type="match status" value="1"/>
</dbReference>
<dbReference type="PANTHER" id="PTHR11691">
    <property type="entry name" value="TYPE I INTERFERON"/>
    <property type="match status" value="1"/>
</dbReference>
<dbReference type="Pfam" id="PF00143">
    <property type="entry name" value="Interferon"/>
    <property type="match status" value="1"/>
</dbReference>
<dbReference type="PRINTS" id="PR00266">
    <property type="entry name" value="INTERFERONAB"/>
</dbReference>
<dbReference type="SMART" id="SM00076">
    <property type="entry name" value="IFabd"/>
    <property type="match status" value="1"/>
</dbReference>
<dbReference type="SUPFAM" id="SSF47266">
    <property type="entry name" value="4-helical cytokines"/>
    <property type="match status" value="1"/>
</dbReference>
<dbReference type="PROSITE" id="PS00252">
    <property type="entry name" value="INTERFERON_A_B_D"/>
    <property type="match status" value="1"/>
</dbReference>
<keyword id="KW-0051">Antiviral defense</keyword>
<keyword id="KW-0202">Cytokine</keyword>
<keyword id="KW-0903">Direct protein sequencing</keyword>
<keyword id="KW-1015">Disulfide bond</keyword>
<keyword id="KW-0372">Hormone</keyword>
<keyword id="KW-0635">Pregnancy</keyword>
<keyword id="KW-1185">Reference proteome</keyword>
<keyword id="KW-0964">Secreted</keyword>
<keyword id="KW-0732">Signal</keyword>
<organism>
    <name type="scientific">Ovis aries</name>
    <name type="common">Sheep</name>
    <dbReference type="NCBI Taxonomy" id="9940"/>
    <lineage>
        <taxon>Eukaryota</taxon>
        <taxon>Metazoa</taxon>
        <taxon>Chordata</taxon>
        <taxon>Craniata</taxon>
        <taxon>Vertebrata</taxon>
        <taxon>Euteleostomi</taxon>
        <taxon>Mammalia</taxon>
        <taxon>Eutheria</taxon>
        <taxon>Laurasiatheria</taxon>
        <taxon>Artiodactyla</taxon>
        <taxon>Ruminantia</taxon>
        <taxon>Pecora</taxon>
        <taxon>Bovidae</taxon>
        <taxon>Caprinae</taxon>
        <taxon>Ovis</taxon>
    </lineage>
</organism>
<reference key="1">
    <citation type="journal article" date="1989" name="J. Reprod. Fertil. Suppl.">
        <title>Antiluteolytic effects of blastocyst-secreted interferon investigated in vitro and in vivo in the sheep.</title>
        <authorList>
            <person name="Stewart H.J."/>
            <person name="Flint A.P."/>
            <person name="Lamming G.E."/>
            <person name="McCann S.H."/>
            <person name="Parkinson T.J."/>
        </authorList>
    </citation>
    <scope>NUCLEOTIDE SEQUENCE [MRNA] (IFN-TAU2C)</scope>
    <scope>VARIANT ASP-106</scope>
</reference>
<reference key="2">
    <citation type="journal article" date="1989" name="J. Mol. Endocrinol.">
        <title>Sheep antiluteolytic interferon: cDNA sequence and analysis of mRNA levels.</title>
        <authorList>
            <person name="Stewart H.J."/>
            <person name="McCann S.H."/>
            <person name="Northrop A.J."/>
            <person name="Lamming G.E."/>
            <person name="Flint A.P."/>
        </authorList>
    </citation>
    <scope>NUCLEOTIDE SEQUENCE [MRNA] (IFN-TAU2C)</scope>
    <scope>VARIANT ASP-106</scope>
</reference>
<reference key="3">
    <citation type="journal article" date="1989" name="Gene">
        <title>Cloning and expression of cDNA encoding ovine trophoblastin: its identity with a class-II alpha interferon.</title>
        <authorList>
            <person name="Charlier M."/>
            <person name="Hue D."/>
            <person name="Martal J."/>
            <person name="Gaye P."/>
        </authorList>
    </citation>
    <scope>NUCLEOTIDE SEQUENCE [MRNA] (IFN-TAU2C)</scope>
    <scope>VARIANT ASP-106</scope>
    <source>
        <tissue>Embryo</tissue>
    </source>
</reference>
<reference key="4">
    <citation type="journal article" date="1990" name="Nucleic Acids Res.">
        <title>Sequence variability among ovine trophoblast interferon cDNA.</title>
        <authorList>
            <person name="Klemann S.W."/>
            <person name="Imakawa K."/>
            <person name="Roberts R.M."/>
        </authorList>
    </citation>
    <scope>NUCLEOTIDE SEQUENCE [MRNA] (IFN-TAU2C)</scope>
    <scope>VARIANT ASP-106</scope>
</reference>
<reference key="5">
    <citation type="submission" date="1999-06" db="EMBL/GenBank/DDBJ databases">
        <title>Identification of the expressed forms of ovine interferon-tau in the peri-implantation conceptus: sequence relationships and comparative biological activities.</title>
        <authorList>
            <person name="Winkelman G.L."/>
            <person name="Roberts R.M."/>
            <person name="Peterson A.J."/>
            <person name="Alexenko A.P."/>
            <person name="Ealy A.D."/>
        </authorList>
    </citation>
    <scope>NUCLEOTIDE SEQUENCE [MRNA] OF 24-195 (IFN-TAU2A AND IFN-TAU2B)</scope>
    <scope>VARIANT LYS-130</scope>
    <source>
        <tissue>Embryo</tissue>
    </source>
</reference>
<reference key="6">
    <citation type="journal article" date="1988" name="FEBS Lett.">
        <title>High homology between a trophoblastic protein (trophoblastin) isolated from ovine embryo and alpha-interferons.</title>
        <authorList>
            <person name="Charpigny G."/>
            <person name="Reinaud P."/>
            <person name="Huet J.-C."/>
            <person name="Guillomot M."/>
            <person name="Charlier M."/>
            <person name="Pernollet J.-C."/>
            <person name="Martal J."/>
        </authorList>
    </citation>
    <scope>PROTEIN SEQUENCE OF 24-68</scope>
</reference>
<reference key="7">
    <citation type="journal article" date="1996" name="Endocrinology">
        <title>Ovine interferon tau suppresses transcription of the estrogen receptor and oxytocin receptor genes in the ovine endometrium.</title>
        <authorList>
            <person name="Spencer T.E."/>
            <person name="Bazer F.W."/>
        </authorList>
    </citation>
    <scope>FUNCTION</scope>
</reference>
<reference key="8">
    <citation type="journal article" date="1994" name="Protein Eng.">
        <title>Predicted structural motif of IFN tau.</title>
        <authorList>
            <person name="Jarpe M.A."/>
            <person name="Johnson H.M."/>
            <person name="Bazer F.W."/>
            <person name="Ott T.L."/>
            <person name="Curto E.V."/>
            <person name="Krishna N.R."/>
            <person name="Pontzer C.H."/>
        </authorList>
    </citation>
    <scope>CIRCULAR DICHROISM ANALYSIS</scope>
    <scope>3D-STRUCTURE MODELING</scope>
</reference>
<reference key="9">
    <citation type="journal article" date="1995" name="J. Interferon Cytokine Res.">
        <title>A three-dimensional model of interferon-tau.</title>
        <authorList>
            <person name="Senda T."/>
            <person name="Saitoh S."/>
            <person name="Mitsui Y."/>
            <person name="Li J."/>
            <person name="Roberts R.M."/>
        </authorList>
    </citation>
    <scope>3D-STRUCTURE MODELING</scope>
</reference>
<reference key="10">
    <citation type="journal article" date="1998" name="Biochimie">
        <title>IFN-tau: a novel subtype I IFN1. Structural characteristics, non-ubiquitous expression, structure-function relationships, a pregnancy hormonal embryonic signal and cross-species therapeutic potentialities.</title>
        <authorList>
            <person name="Martal J.L."/>
            <person name="Chene N.M."/>
            <person name="Huynh L.P."/>
            <person name="L'Haridon R.M."/>
            <person name="Reinaud P.B."/>
            <person name="Guillomot M.W."/>
            <person name="Charlier M.A."/>
            <person name="Charpigny S.Y."/>
        </authorList>
    </citation>
    <scope>REVIEW</scope>
</reference>